<gene>
    <name evidence="1" type="primary">plsY</name>
    <name type="ordered locus">Gmet_3020</name>
</gene>
<accession>Q39R89</accession>
<dbReference type="EC" id="2.3.1.275" evidence="1"/>
<dbReference type="EMBL" id="CP000148">
    <property type="protein sequence ID" value="ABB33235.1"/>
    <property type="molecule type" value="Genomic_DNA"/>
</dbReference>
<dbReference type="RefSeq" id="WP_004514334.1">
    <property type="nucleotide sequence ID" value="NC_007517.1"/>
</dbReference>
<dbReference type="SMR" id="Q39R89"/>
<dbReference type="STRING" id="269799.Gmet_3020"/>
<dbReference type="KEGG" id="gme:Gmet_3020"/>
<dbReference type="eggNOG" id="COG0344">
    <property type="taxonomic scope" value="Bacteria"/>
</dbReference>
<dbReference type="HOGENOM" id="CLU_081254_0_0_7"/>
<dbReference type="UniPathway" id="UPA00085"/>
<dbReference type="Proteomes" id="UP000007073">
    <property type="component" value="Chromosome"/>
</dbReference>
<dbReference type="GO" id="GO:0005886">
    <property type="term" value="C:plasma membrane"/>
    <property type="evidence" value="ECO:0007669"/>
    <property type="project" value="UniProtKB-SubCell"/>
</dbReference>
<dbReference type="GO" id="GO:0043772">
    <property type="term" value="F:acyl-phosphate glycerol-3-phosphate acyltransferase activity"/>
    <property type="evidence" value="ECO:0007669"/>
    <property type="project" value="UniProtKB-UniRule"/>
</dbReference>
<dbReference type="GO" id="GO:0008654">
    <property type="term" value="P:phospholipid biosynthetic process"/>
    <property type="evidence" value="ECO:0007669"/>
    <property type="project" value="UniProtKB-UniRule"/>
</dbReference>
<dbReference type="HAMAP" id="MF_01043">
    <property type="entry name" value="PlsY"/>
    <property type="match status" value="1"/>
</dbReference>
<dbReference type="InterPro" id="IPR003811">
    <property type="entry name" value="G3P_acylTferase_PlsY"/>
</dbReference>
<dbReference type="NCBIfam" id="TIGR00023">
    <property type="entry name" value="glycerol-3-phosphate 1-O-acyltransferase PlsY"/>
    <property type="match status" value="1"/>
</dbReference>
<dbReference type="PANTHER" id="PTHR30309:SF0">
    <property type="entry name" value="GLYCEROL-3-PHOSPHATE ACYLTRANSFERASE-RELATED"/>
    <property type="match status" value="1"/>
</dbReference>
<dbReference type="PANTHER" id="PTHR30309">
    <property type="entry name" value="INNER MEMBRANE PROTEIN YGIH"/>
    <property type="match status" value="1"/>
</dbReference>
<dbReference type="Pfam" id="PF02660">
    <property type="entry name" value="G3P_acyltransf"/>
    <property type="match status" value="1"/>
</dbReference>
<dbReference type="SMART" id="SM01207">
    <property type="entry name" value="G3P_acyltransf"/>
    <property type="match status" value="1"/>
</dbReference>
<reference key="1">
    <citation type="journal article" date="2009" name="BMC Microbiol.">
        <title>The genome sequence of Geobacter metallireducens: features of metabolism, physiology and regulation common and dissimilar to Geobacter sulfurreducens.</title>
        <authorList>
            <person name="Aklujkar M."/>
            <person name="Krushkal J."/>
            <person name="DiBartolo G."/>
            <person name="Lapidus A."/>
            <person name="Land M.L."/>
            <person name="Lovley D.R."/>
        </authorList>
    </citation>
    <scope>NUCLEOTIDE SEQUENCE [LARGE SCALE GENOMIC DNA]</scope>
    <source>
        <strain>ATCC 53774 / DSM 7210 / GS-15</strain>
    </source>
</reference>
<feature type="chain" id="PRO_0000250303" description="Glycerol-3-phosphate acyltransferase">
    <location>
        <begin position="1"/>
        <end position="194"/>
    </location>
</feature>
<feature type="transmembrane region" description="Helical" evidence="1">
    <location>
        <begin position="2"/>
        <end position="22"/>
    </location>
</feature>
<feature type="transmembrane region" description="Helical" evidence="1">
    <location>
        <begin position="51"/>
        <end position="71"/>
    </location>
</feature>
<feature type="transmembrane region" description="Helical" evidence="1">
    <location>
        <begin position="80"/>
        <end position="100"/>
    </location>
</feature>
<feature type="transmembrane region" description="Helical" evidence="1">
    <location>
        <begin position="112"/>
        <end position="132"/>
    </location>
</feature>
<feature type="transmembrane region" description="Helical" evidence="1">
    <location>
        <begin position="155"/>
        <end position="175"/>
    </location>
</feature>
<comment type="function">
    <text evidence="1">Catalyzes the transfer of an acyl group from acyl-phosphate (acyl-PO(4)) to glycerol-3-phosphate (G3P) to form lysophosphatidic acid (LPA). This enzyme utilizes acyl-phosphate as fatty acyl donor, but not acyl-CoA or acyl-ACP.</text>
</comment>
<comment type="catalytic activity">
    <reaction evidence="1">
        <text>an acyl phosphate + sn-glycerol 3-phosphate = a 1-acyl-sn-glycero-3-phosphate + phosphate</text>
        <dbReference type="Rhea" id="RHEA:34075"/>
        <dbReference type="ChEBI" id="CHEBI:43474"/>
        <dbReference type="ChEBI" id="CHEBI:57597"/>
        <dbReference type="ChEBI" id="CHEBI:57970"/>
        <dbReference type="ChEBI" id="CHEBI:59918"/>
        <dbReference type="EC" id="2.3.1.275"/>
    </reaction>
</comment>
<comment type="pathway">
    <text evidence="1">Lipid metabolism; phospholipid metabolism.</text>
</comment>
<comment type="subunit">
    <text evidence="1">Probably interacts with PlsX.</text>
</comment>
<comment type="subcellular location">
    <subcellularLocation>
        <location evidence="1">Cell inner membrane</location>
        <topology evidence="1">Multi-pass membrane protein</topology>
    </subcellularLocation>
</comment>
<comment type="similarity">
    <text evidence="1">Belongs to the PlsY family.</text>
</comment>
<name>PLSY_GEOMG</name>
<protein>
    <recommendedName>
        <fullName evidence="1">Glycerol-3-phosphate acyltransferase</fullName>
    </recommendedName>
    <alternativeName>
        <fullName evidence="1">Acyl-PO4 G3P acyltransferase</fullName>
    </alternativeName>
    <alternativeName>
        <fullName evidence="1">Acyl-phosphate--glycerol-3-phosphate acyltransferase</fullName>
    </alternativeName>
    <alternativeName>
        <fullName evidence="1">G3P acyltransferase</fullName>
        <shortName evidence="1">GPAT</shortName>
        <ecNumber evidence="1">2.3.1.275</ecNumber>
    </alternativeName>
    <alternativeName>
        <fullName evidence="1">Lysophosphatidic acid synthase</fullName>
        <shortName evidence="1">LPA synthase</shortName>
    </alternativeName>
</protein>
<keyword id="KW-0997">Cell inner membrane</keyword>
<keyword id="KW-1003">Cell membrane</keyword>
<keyword id="KW-0444">Lipid biosynthesis</keyword>
<keyword id="KW-0443">Lipid metabolism</keyword>
<keyword id="KW-0472">Membrane</keyword>
<keyword id="KW-0594">Phospholipid biosynthesis</keyword>
<keyword id="KW-1208">Phospholipid metabolism</keyword>
<keyword id="KW-1185">Reference proteome</keyword>
<keyword id="KW-0808">Transferase</keyword>
<keyword id="KW-0812">Transmembrane</keyword>
<keyword id="KW-1133">Transmembrane helix</keyword>
<evidence type="ECO:0000255" key="1">
    <source>
        <dbReference type="HAMAP-Rule" id="MF_01043"/>
    </source>
</evidence>
<sequence>MLIEILLLAGAYLLGSIPTGLLLAKAAGVDIRTTGSGNIGATNVYRTLGRSVGIATLVGDCLKGLIPVLAAKYLGMTDLWIALAGLAAFLGHVYTVFLGFKGGKGVATALGVFLGLAPLAVLIALGIFVAVVATSRYISLGSITAAAAMPPVVAFLSGRPPLVGVTVVIALLVIWKHRENIQRLRAGTENRFKA</sequence>
<organism>
    <name type="scientific">Geobacter metallireducens (strain ATCC 53774 / DSM 7210 / GS-15)</name>
    <dbReference type="NCBI Taxonomy" id="269799"/>
    <lineage>
        <taxon>Bacteria</taxon>
        <taxon>Pseudomonadati</taxon>
        <taxon>Thermodesulfobacteriota</taxon>
        <taxon>Desulfuromonadia</taxon>
        <taxon>Geobacterales</taxon>
        <taxon>Geobacteraceae</taxon>
        <taxon>Geobacter</taxon>
    </lineage>
</organism>
<proteinExistence type="inferred from homology"/>